<sequence length="335" mass="35923">MTLPLLGPMTLSGFAHSWFFLFIFVIAGLIAVYVVLQLARQKRMLRFANMELLESVAPQRPSRFRHIPAMLLALSLVLFTVAMAGPTHDVRIPRNRAVVMLVIDVSQSMRATDVEPNRMVAAQEAAKQFADELTPGINLGLIAYAGTATVLVSPTTNREATKAALDKLQFADRTATGEAIFTALQAIATVGAVIGGGDTPPPARIVLFSDGKETMPTNPDNPKGAYTAARTAKDQGVPISTISFGTPYGFVEINDQRQPVPVDDETMKKVAQLSGGNSYNAATLAELNSVYASLQQQIGYETIRGDASMGWLRLGALVLVAAALAALLINRRLPT</sequence>
<proteinExistence type="inferred from homology"/>
<evidence type="ECO:0000255" key="1">
    <source>
        <dbReference type="HAMAP-Rule" id="MF_01340"/>
    </source>
</evidence>
<accession>B2HPD3</accession>
<protein>
    <recommendedName>
        <fullName evidence="1">UPF0353 protein MMAR_2288</fullName>
    </recommendedName>
</protein>
<comment type="subcellular location">
    <subcellularLocation>
        <location evidence="1">Cell membrane</location>
        <topology evidence="1">Multi-pass membrane protein</topology>
    </subcellularLocation>
</comment>
<comment type="similarity">
    <text evidence="1">Belongs to the UPF0353 family.</text>
</comment>
<keyword id="KW-1003">Cell membrane</keyword>
<keyword id="KW-0472">Membrane</keyword>
<keyword id="KW-1185">Reference proteome</keyword>
<keyword id="KW-0812">Transmembrane</keyword>
<keyword id="KW-1133">Transmembrane helix</keyword>
<feature type="chain" id="PRO_1000142755" description="UPF0353 protein MMAR_2288">
    <location>
        <begin position="1"/>
        <end position="335"/>
    </location>
</feature>
<feature type="transmembrane region" description="Helical" evidence="1">
    <location>
        <begin position="18"/>
        <end position="38"/>
    </location>
</feature>
<feature type="transmembrane region" description="Helical" evidence="1">
    <location>
        <begin position="67"/>
        <end position="87"/>
    </location>
</feature>
<feature type="transmembrane region" description="Helical" evidence="1">
    <location>
        <begin position="309"/>
        <end position="329"/>
    </location>
</feature>
<feature type="domain" description="VWFA" evidence="1">
    <location>
        <begin position="98"/>
        <end position="294"/>
    </location>
</feature>
<dbReference type="EMBL" id="CP000854">
    <property type="protein sequence ID" value="ACC40737.1"/>
    <property type="molecule type" value="Genomic_DNA"/>
</dbReference>
<dbReference type="RefSeq" id="WP_012394040.1">
    <property type="nucleotide sequence ID" value="NC_010612.1"/>
</dbReference>
<dbReference type="SMR" id="B2HPD3"/>
<dbReference type="STRING" id="216594.MMAR_2288"/>
<dbReference type="KEGG" id="mmi:MMAR_2288"/>
<dbReference type="eggNOG" id="COG2304">
    <property type="taxonomic scope" value="Bacteria"/>
</dbReference>
<dbReference type="HOGENOM" id="CLU_024570_2_0_11"/>
<dbReference type="OrthoDB" id="8882959at2"/>
<dbReference type="Proteomes" id="UP000001190">
    <property type="component" value="Chromosome"/>
</dbReference>
<dbReference type="GO" id="GO:0005886">
    <property type="term" value="C:plasma membrane"/>
    <property type="evidence" value="ECO:0007669"/>
    <property type="project" value="UniProtKB-SubCell"/>
</dbReference>
<dbReference type="CDD" id="cd00198">
    <property type="entry name" value="vWFA"/>
    <property type="match status" value="1"/>
</dbReference>
<dbReference type="FunFam" id="3.40.50.410:FF:000078">
    <property type="entry name" value="UPF0353 protein RN09_1826"/>
    <property type="match status" value="1"/>
</dbReference>
<dbReference type="Gene3D" id="3.40.50.410">
    <property type="entry name" value="von Willebrand factor, type A domain"/>
    <property type="match status" value="1"/>
</dbReference>
<dbReference type="HAMAP" id="MF_01340">
    <property type="entry name" value="UPF0353"/>
    <property type="match status" value="1"/>
</dbReference>
<dbReference type="InterPro" id="IPR022933">
    <property type="entry name" value="UPF0353"/>
</dbReference>
<dbReference type="InterPro" id="IPR050768">
    <property type="entry name" value="UPF0353/GerABKA_families"/>
</dbReference>
<dbReference type="InterPro" id="IPR002035">
    <property type="entry name" value="VWF_A"/>
</dbReference>
<dbReference type="InterPro" id="IPR036465">
    <property type="entry name" value="vWFA_dom_sf"/>
</dbReference>
<dbReference type="NCBIfam" id="NF010238">
    <property type="entry name" value="PRK13685.1"/>
    <property type="match status" value="1"/>
</dbReference>
<dbReference type="PANTHER" id="PTHR22550:SF5">
    <property type="entry name" value="LEUCINE ZIPPER PROTEIN 4"/>
    <property type="match status" value="1"/>
</dbReference>
<dbReference type="PANTHER" id="PTHR22550">
    <property type="entry name" value="SPORE GERMINATION PROTEIN"/>
    <property type="match status" value="1"/>
</dbReference>
<dbReference type="Pfam" id="PF13519">
    <property type="entry name" value="VWA_2"/>
    <property type="match status" value="1"/>
</dbReference>
<dbReference type="SMART" id="SM00327">
    <property type="entry name" value="VWA"/>
    <property type="match status" value="1"/>
</dbReference>
<dbReference type="SUPFAM" id="SSF53300">
    <property type="entry name" value="vWA-like"/>
    <property type="match status" value="1"/>
</dbReference>
<dbReference type="PROSITE" id="PS50234">
    <property type="entry name" value="VWFA"/>
    <property type="match status" value="1"/>
</dbReference>
<organism>
    <name type="scientific">Mycobacterium marinum (strain ATCC BAA-535 / M)</name>
    <dbReference type="NCBI Taxonomy" id="216594"/>
    <lineage>
        <taxon>Bacteria</taxon>
        <taxon>Bacillati</taxon>
        <taxon>Actinomycetota</taxon>
        <taxon>Actinomycetes</taxon>
        <taxon>Mycobacteriales</taxon>
        <taxon>Mycobacteriaceae</taxon>
        <taxon>Mycobacterium</taxon>
        <taxon>Mycobacterium ulcerans group</taxon>
    </lineage>
</organism>
<name>Y2288_MYCMM</name>
<reference key="1">
    <citation type="journal article" date="2008" name="Genome Res.">
        <title>Insights from the complete genome sequence of Mycobacterium marinum on the evolution of Mycobacterium tuberculosis.</title>
        <authorList>
            <person name="Stinear T.P."/>
            <person name="Seemann T."/>
            <person name="Harrison P.F."/>
            <person name="Jenkin G.A."/>
            <person name="Davies J.K."/>
            <person name="Johnson P.D."/>
            <person name="Abdellah Z."/>
            <person name="Arrowsmith C."/>
            <person name="Chillingworth T."/>
            <person name="Churcher C."/>
            <person name="Clarke K."/>
            <person name="Cronin A."/>
            <person name="Davis P."/>
            <person name="Goodhead I."/>
            <person name="Holroyd N."/>
            <person name="Jagels K."/>
            <person name="Lord A."/>
            <person name="Moule S."/>
            <person name="Mungall K."/>
            <person name="Norbertczak H."/>
            <person name="Quail M.A."/>
            <person name="Rabbinowitsch E."/>
            <person name="Walker D."/>
            <person name="White B."/>
            <person name="Whitehead S."/>
            <person name="Small P.L."/>
            <person name="Brosch R."/>
            <person name="Ramakrishnan L."/>
            <person name="Fischbach M.A."/>
            <person name="Parkhill J."/>
            <person name="Cole S.T."/>
        </authorList>
    </citation>
    <scope>NUCLEOTIDE SEQUENCE [LARGE SCALE GENOMIC DNA]</scope>
    <source>
        <strain>ATCC BAA-535 / M</strain>
    </source>
</reference>
<gene>
    <name type="ordered locus">MMAR_2288</name>
</gene>